<organism>
    <name type="scientific">Staphylococcus aureus (strain Newman)</name>
    <dbReference type="NCBI Taxonomy" id="426430"/>
    <lineage>
        <taxon>Bacteria</taxon>
        <taxon>Bacillati</taxon>
        <taxon>Bacillota</taxon>
        <taxon>Bacilli</taxon>
        <taxon>Bacillales</taxon>
        <taxon>Staphylococcaceae</taxon>
        <taxon>Staphylococcus</taxon>
    </lineage>
</organism>
<name>CDR_STAAE</name>
<comment type="function">
    <text evidence="1">Catalyzes specifically the NADPH-dependent reduction of coenzyme A disulfide.</text>
</comment>
<comment type="catalytic activity">
    <reaction evidence="1">
        <text>NADP(+) + 2 CoA = CoA-disulfide + NADPH + H(+)</text>
        <dbReference type="Rhea" id="RHEA:14705"/>
        <dbReference type="ChEBI" id="CHEBI:15378"/>
        <dbReference type="ChEBI" id="CHEBI:57287"/>
        <dbReference type="ChEBI" id="CHEBI:57783"/>
        <dbReference type="ChEBI" id="CHEBI:58349"/>
        <dbReference type="ChEBI" id="CHEBI:62209"/>
        <dbReference type="EC" id="1.8.1.14"/>
    </reaction>
</comment>
<comment type="cofactor">
    <cofactor evidence="1">
        <name>FAD</name>
        <dbReference type="ChEBI" id="CHEBI:57692"/>
    </cofactor>
    <text evidence="1">Binds 1 FAD per subunit.</text>
</comment>
<comment type="subunit">
    <text evidence="1">Homodimer.</text>
</comment>
<comment type="domain">
    <text evidence="1">Contains 2 FAD binding domains and a single NADPH binding domain.</text>
</comment>
<comment type="miscellaneous">
    <text evidence="1">Reduction of disulfides occurs by a thiol-disulfide exchange reaction, but involves only a single catalytic cysteine residue that forms a stable mixed disulfide with CoA during catalysis.</text>
</comment>
<comment type="similarity">
    <text evidence="1">Belongs to the class-III pyridine nucleotide-disulfide oxidoreductase family.</text>
</comment>
<dbReference type="EC" id="1.8.1.14" evidence="1"/>
<dbReference type="EMBL" id="AP009351">
    <property type="protein sequence ID" value="BAF67113.1"/>
    <property type="molecule type" value="Genomic_DNA"/>
</dbReference>
<dbReference type="RefSeq" id="WP_001124525.1">
    <property type="nucleotide sequence ID" value="NZ_JBBIAE010000002.1"/>
</dbReference>
<dbReference type="SMR" id="A6QFI1"/>
<dbReference type="KEGG" id="sae:NWMN_0841"/>
<dbReference type="HOGENOM" id="CLU_003291_1_3_9"/>
<dbReference type="Proteomes" id="UP000006386">
    <property type="component" value="Chromosome"/>
</dbReference>
<dbReference type="GO" id="GO:0050451">
    <property type="term" value="F:CoA-disulfide reductase (NADPH) activity"/>
    <property type="evidence" value="ECO:0007669"/>
    <property type="project" value="UniProtKB-UniRule"/>
</dbReference>
<dbReference type="GO" id="GO:0050660">
    <property type="term" value="F:flavin adenine dinucleotide binding"/>
    <property type="evidence" value="ECO:0007669"/>
    <property type="project" value="UniProtKB-UniRule"/>
</dbReference>
<dbReference type="GO" id="GO:0050661">
    <property type="term" value="F:NADP binding"/>
    <property type="evidence" value="ECO:0007669"/>
    <property type="project" value="UniProtKB-UniRule"/>
</dbReference>
<dbReference type="GO" id="GO:0003756">
    <property type="term" value="F:protein disulfide isomerase activity"/>
    <property type="evidence" value="ECO:0007669"/>
    <property type="project" value="UniProtKB-UniRule"/>
</dbReference>
<dbReference type="Gene3D" id="3.30.390.30">
    <property type="match status" value="1"/>
</dbReference>
<dbReference type="Gene3D" id="3.50.50.60">
    <property type="entry name" value="FAD/NAD(P)-binding domain"/>
    <property type="match status" value="2"/>
</dbReference>
<dbReference type="HAMAP" id="MF_01608">
    <property type="entry name" value="CoA_diS_reduct"/>
    <property type="match status" value="1"/>
</dbReference>
<dbReference type="InterPro" id="IPR017758">
    <property type="entry name" value="CoA_disulphide_reductase"/>
</dbReference>
<dbReference type="InterPro" id="IPR023536">
    <property type="entry name" value="CoA_disulphide_reductase_staph"/>
</dbReference>
<dbReference type="InterPro" id="IPR050260">
    <property type="entry name" value="FAD-bd_OxRdtase"/>
</dbReference>
<dbReference type="InterPro" id="IPR036188">
    <property type="entry name" value="FAD/NAD-bd_sf"/>
</dbReference>
<dbReference type="InterPro" id="IPR023753">
    <property type="entry name" value="FAD/NAD-binding_dom"/>
</dbReference>
<dbReference type="InterPro" id="IPR016156">
    <property type="entry name" value="FAD/NAD-linked_Rdtase_dimer_sf"/>
</dbReference>
<dbReference type="InterPro" id="IPR004099">
    <property type="entry name" value="Pyr_nucl-diS_OxRdtase_dimer"/>
</dbReference>
<dbReference type="NCBIfam" id="TIGR03385">
    <property type="entry name" value="CoA_CoA_reduc"/>
    <property type="match status" value="1"/>
</dbReference>
<dbReference type="NCBIfam" id="NF010037">
    <property type="entry name" value="PRK13512.1"/>
    <property type="match status" value="1"/>
</dbReference>
<dbReference type="PANTHER" id="PTHR43429:SF1">
    <property type="entry name" value="NAD(P)H SULFUR OXIDOREDUCTASE (COA-DEPENDENT)"/>
    <property type="match status" value="1"/>
</dbReference>
<dbReference type="PANTHER" id="PTHR43429">
    <property type="entry name" value="PYRIDINE NUCLEOTIDE-DISULFIDE OXIDOREDUCTASE DOMAIN-CONTAINING"/>
    <property type="match status" value="1"/>
</dbReference>
<dbReference type="Pfam" id="PF07992">
    <property type="entry name" value="Pyr_redox_2"/>
    <property type="match status" value="1"/>
</dbReference>
<dbReference type="Pfam" id="PF02852">
    <property type="entry name" value="Pyr_redox_dim"/>
    <property type="match status" value="1"/>
</dbReference>
<dbReference type="PRINTS" id="PR00368">
    <property type="entry name" value="FADPNR"/>
</dbReference>
<dbReference type="PRINTS" id="PR00411">
    <property type="entry name" value="PNDRDTASEI"/>
</dbReference>
<dbReference type="SUPFAM" id="SSF51905">
    <property type="entry name" value="FAD/NAD(P)-binding domain"/>
    <property type="match status" value="1"/>
</dbReference>
<dbReference type="SUPFAM" id="SSF55424">
    <property type="entry name" value="FAD/NAD-linked reductases, dimerisation (C-terminal) domain"/>
    <property type="match status" value="1"/>
</dbReference>
<feature type="chain" id="PRO_1000073626" description="Coenzyme A disulfide reductase">
    <location>
        <begin position="1"/>
        <end position="438"/>
    </location>
</feature>
<feature type="active site" description="Nucleophile" evidence="1">
    <location>
        <position position="43"/>
    </location>
</feature>
<feature type="active site" description="Redox-active" evidence="1">
    <location>
        <position position="43"/>
    </location>
</feature>
<feature type="binding site" evidence="1">
    <location>
        <begin position="8"/>
        <end position="33"/>
    </location>
    <ligand>
        <name>FAD</name>
        <dbReference type="ChEBI" id="CHEBI:57692"/>
    </ligand>
</feature>
<feature type="binding site" evidence="1">
    <location>
        <position position="15"/>
    </location>
    <ligand>
        <name>substrate</name>
    </ligand>
</feature>
<feature type="binding site" evidence="1">
    <location>
        <position position="19"/>
    </location>
    <ligand>
        <name>substrate</name>
    </ligand>
</feature>
<feature type="binding site" evidence="1">
    <location>
        <position position="22"/>
    </location>
    <ligand>
        <name>substrate</name>
    </ligand>
</feature>
<feature type="binding site" evidence="1">
    <location>
        <position position="39"/>
    </location>
    <ligand>
        <name>substrate</name>
    </ligand>
</feature>
<feature type="binding site" evidence="1">
    <location>
        <position position="42"/>
    </location>
    <ligand>
        <name>substrate</name>
    </ligand>
</feature>
<feature type="binding site" evidence="1">
    <location>
        <position position="71"/>
    </location>
    <ligand>
        <name>substrate</name>
    </ligand>
</feature>
<feature type="binding site" evidence="1">
    <location>
        <begin position="151"/>
        <end position="166"/>
    </location>
    <ligand>
        <name>NADP(+)</name>
        <dbReference type="ChEBI" id="CHEBI:58349"/>
    </ligand>
</feature>
<feature type="binding site" evidence="1">
    <location>
        <begin position="267"/>
        <end position="277"/>
    </location>
    <ligand>
        <name>FAD</name>
        <dbReference type="ChEBI" id="CHEBI:57692"/>
    </ligand>
</feature>
<feature type="binding site" evidence="1">
    <location>
        <position position="299"/>
    </location>
    <ligand>
        <name>substrate</name>
    </ligand>
</feature>
<feature type="binding site" evidence="1">
    <location>
        <position position="419"/>
    </location>
    <ligand>
        <name>FAD</name>
        <dbReference type="ChEBI" id="CHEBI:57692"/>
    </ligand>
</feature>
<feature type="binding site" evidence="1">
    <location>
        <position position="427"/>
    </location>
    <ligand>
        <name>substrate</name>
    </ligand>
</feature>
<keyword id="KW-0274">FAD</keyword>
<keyword id="KW-0285">Flavoprotein</keyword>
<keyword id="KW-0521">NADP</keyword>
<keyword id="KW-0560">Oxidoreductase</keyword>
<keyword id="KW-0676">Redox-active center</keyword>
<gene>
    <name evidence="1" type="primary">cdr</name>
    <name type="ordered locus">NWMN_0841</name>
</gene>
<accession>A6QFI1</accession>
<evidence type="ECO:0000255" key="1">
    <source>
        <dbReference type="HAMAP-Rule" id="MF_01608"/>
    </source>
</evidence>
<reference key="1">
    <citation type="journal article" date="2008" name="J. Bacteriol.">
        <title>Genome sequence of Staphylococcus aureus strain Newman and comparative analysis of staphylococcal genomes: polymorphism and evolution of two major pathogenicity islands.</title>
        <authorList>
            <person name="Baba T."/>
            <person name="Bae T."/>
            <person name="Schneewind O."/>
            <person name="Takeuchi F."/>
            <person name="Hiramatsu K."/>
        </authorList>
    </citation>
    <scope>NUCLEOTIDE SEQUENCE [LARGE SCALE GENOMIC DNA]</scope>
    <source>
        <strain>Newman</strain>
    </source>
</reference>
<protein>
    <recommendedName>
        <fullName evidence="1">Coenzyme A disulfide reductase</fullName>
        <shortName evidence="1">CoA-disulfide reductase</shortName>
        <shortName evidence="1">CoADR</shortName>
        <ecNumber evidence="1">1.8.1.14</ecNumber>
    </recommendedName>
</protein>
<sequence>MPKIVVVGAVAGGATCASQIRRLDKESDIIIFEKDRDMSFANCALPYVIGEVVEDRRYALAYTPEKFYDRKQITVKTYHEVIAINDERQTVSVLNRKTNEQFEESYDKLILSPGASANSLGFESDITFTLRNLEDTDAIDQFIKANQVDKVLVVGAGYVSLEVLENLYERGLHPTLIHRSDKINKLMDADMNQPILDELDKREIPYRLNEEINAINGNEITFKSGKVEHYDMIIEGVGTHPNSKFIESSNIKLDRKGFIPVNDKFETNVPNIYAIGDIATSHYRHVDLPASVPLAWGAHRAASIVAEQIAGNDTIEFKGFLGNNIVKFFDYTFASVGVKPNELKQFDYKMVEVTQGAHANYYPGNSPLHLRVYYDTSNRQILRAAAVGKEGADKRIDVLSMAMMNQLTVDELTEFEVAYAPPYSHPKDLINMIGYKAK</sequence>
<proteinExistence type="inferred from homology"/>